<gene>
    <name evidence="1" type="primary">dctA</name>
    <name type="ordered locus">YpAngola_A4067</name>
</gene>
<evidence type="ECO:0000255" key="1">
    <source>
        <dbReference type="HAMAP-Rule" id="MF_01300"/>
    </source>
</evidence>
<proteinExistence type="inferred from homology"/>
<accession>A9R5H1</accession>
<sequence length="429" mass="45498">MKVSIFKTLYFQVLTAITIGVLLGHFYPEIGAQMKPLGDGFVKLIKMIIAPVIFCTVVTGIAGMESMKAVGRTGAIALLYFEIVSTLALLIGLVVVNVAQPGVGMNIDPATLDAKAVALYAEQASQQGIIPFLLDIIPGSVVGAFASGNILQVLLFAVLFGFALHRLGEKGQLIFNVIESFSRVIFGVINMIMRLAPLGAFGAMAFTIGKYGVGSLVQLGQLILCFYLTCILFVVLVLGTIAKFNGFNIFKFIRYIKEELLIVLGTSSSESVLPRMLDKMENAGCKKSVVGLVIPTGYSFNLDGTSIYLTMAAVFIAQATNTHMDIMHQVTLLVVLLLSSKGAAGVTGSGFIVLAATISAVGHLPLAGLALILGIDRFMSEARALTNLVGNGVATIVVAKWCKQLDNDQLQAVLSNKVLPNVKSSVSVS</sequence>
<keyword id="KW-0997">Cell inner membrane</keyword>
<keyword id="KW-1003">Cell membrane</keyword>
<keyword id="KW-0472">Membrane</keyword>
<keyword id="KW-0769">Symport</keyword>
<keyword id="KW-0812">Transmembrane</keyword>
<keyword id="KW-1133">Transmembrane helix</keyword>
<keyword id="KW-0813">Transport</keyword>
<name>DCTA_YERPG</name>
<comment type="function">
    <text evidence="1">Responsible for the transport of dicarboxylates such as succinate, fumarate, and malate from the periplasm across the membrane.</text>
</comment>
<comment type="subcellular location">
    <subcellularLocation>
        <location evidence="1">Cell inner membrane</location>
        <topology evidence="1">Multi-pass membrane protein</topology>
    </subcellularLocation>
</comment>
<comment type="similarity">
    <text evidence="1">Belongs to the dicarboxylate/amino acid:cation symporter (DAACS) (TC 2.A.23) family.</text>
</comment>
<protein>
    <recommendedName>
        <fullName evidence="1">C4-dicarboxylate transport protein</fullName>
    </recommendedName>
</protein>
<reference key="1">
    <citation type="journal article" date="2010" name="J. Bacteriol.">
        <title>Genome sequence of the deep-rooted Yersinia pestis strain Angola reveals new insights into the evolution and pangenome of the plague bacterium.</title>
        <authorList>
            <person name="Eppinger M."/>
            <person name="Worsham P.L."/>
            <person name="Nikolich M.P."/>
            <person name="Riley D.R."/>
            <person name="Sebastian Y."/>
            <person name="Mou S."/>
            <person name="Achtman M."/>
            <person name="Lindler L.E."/>
            <person name="Ravel J."/>
        </authorList>
    </citation>
    <scope>NUCLEOTIDE SEQUENCE [LARGE SCALE GENOMIC DNA]</scope>
    <source>
        <strain>Angola</strain>
    </source>
</reference>
<feature type="chain" id="PRO_1000140478" description="C4-dicarboxylate transport protein">
    <location>
        <begin position="1"/>
        <end position="429"/>
    </location>
</feature>
<feature type="transmembrane region" description="Helical" evidence="1">
    <location>
        <begin position="3"/>
        <end position="23"/>
    </location>
</feature>
<feature type="transmembrane region" description="Helical" evidence="1">
    <location>
        <begin position="44"/>
        <end position="64"/>
    </location>
</feature>
<feature type="transmembrane region" description="Helical" evidence="1">
    <location>
        <begin position="76"/>
        <end position="96"/>
    </location>
</feature>
<feature type="transmembrane region" description="Helical" evidence="1">
    <location>
        <begin position="144"/>
        <end position="164"/>
    </location>
</feature>
<feature type="transmembrane region" description="Helical" evidence="1">
    <location>
        <begin position="184"/>
        <end position="204"/>
    </location>
</feature>
<feature type="transmembrane region" description="Helical" evidence="1">
    <location>
        <begin position="222"/>
        <end position="242"/>
    </location>
</feature>
<feature type="transmembrane region" description="Helical" evidence="1">
    <location>
        <begin position="331"/>
        <end position="351"/>
    </location>
</feature>
<feature type="transmembrane region" description="Helical" evidence="1">
    <location>
        <begin position="352"/>
        <end position="372"/>
    </location>
</feature>
<organism>
    <name type="scientific">Yersinia pestis bv. Antiqua (strain Angola)</name>
    <dbReference type="NCBI Taxonomy" id="349746"/>
    <lineage>
        <taxon>Bacteria</taxon>
        <taxon>Pseudomonadati</taxon>
        <taxon>Pseudomonadota</taxon>
        <taxon>Gammaproteobacteria</taxon>
        <taxon>Enterobacterales</taxon>
        <taxon>Yersiniaceae</taxon>
        <taxon>Yersinia</taxon>
    </lineage>
</organism>
<dbReference type="EMBL" id="CP000901">
    <property type="protein sequence ID" value="ABX85549.1"/>
    <property type="molecule type" value="Genomic_DNA"/>
</dbReference>
<dbReference type="RefSeq" id="WP_002209553.1">
    <property type="nucleotide sequence ID" value="NZ_CP009935.1"/>
</dbReference>
<dbReference type="SMR" id="A9R5H1"/>
<dbReference type="KEGG" id="ypg:YpAngola_A4067"/>
<dbReference type="PATRIC" id="fig|349746.12.peg.795"/>
<dbReference type="GO" id="GO:0005886">
    <property type="term" value="C:plasma membrane"/>
    <property type="evidence" value="ECO:0007669"/>
    <property type="project" value="UniProtKB-SubCell"/>
</dbReference>
<dbReference type="GO" id="GO:0015138">
    <property type="term" value="F:fumarate transmembrane transporter activity"/>
    <property type="evidence" value="ECO:0007669"/>
    <property type="project" value="TreeGrafter"/>
</dbReference>
<dbReference type="GO" id="GO:0015366">
    <property type="term" value="F:malate:proton symporter activity"/>
    <property type="evidence" value="ECO:0007669"/>
    <property type="project" value="TreeGrafter"/>
</dbReference>
<dbReference type="GO" id="GO:0015141">
    <property type="term" value="F:succinate transmembrane transporter activity"/>
    <property type="evidence" value="ECO:0007669"/>
    <property type="project" value="TreeGrafter"/>
</dbReference>
<dbReference type="GO" id="GO:0070778">
    <property type="term" value="P:L-aspartate transmembrane transport"/>
    <property type="evidence" value="ECO:0007669"/>
    <property type="project" value="TreeGrafter"/>
</dbReference>
<dbReference type="FunFam" id="1.10.3860.10:FF:000001">
    <property type="entry name" value="C4-dicarboxylate transport protein"/>
    <property type="match status" value="1"/>
</dbReference>
<dbReference type="Gene3D" id="1.10.3860.10">
    <property type="entry name" value="Sodium:dicarboxylate symporter"/>
    <property type="match status" value="1"/>
</dbReference>
<dbReference type="HAMAP" id="MF_01300">
    <property type="entry name" value="C4_dicarb_transport"/>
    <property type="match status" value="1"/>
</dbReference>
<dbReference type="InterPro" id="IPR023954">
    <property type="entry name" value="C4_dicarb_transport"/>
</dbReference>
<dbReference type="InterPro" id="IPR001991">
    <property type="entry name" value="Na-dicarboxylate_symporter"/>
</dbReference>
<dbReference type="InterPro" id="IPR018107">
    <property type="entry name" value="Na-dicarboxylate_symporter_CS"/>
</dbReference>
<dbReference type="InterPro" id="IPR036458">
    <property type="entry name" value="Na:dicarbo_symporter_sf"/>
</dbReference>
<dbReference type="NCBIfam" id="NF002461">
    <property type="entry name" value="PRK01663.1"/>
    <property type="match status" value="1"/>
</dbReference>
<dbReference type="NCBIfam" id="NF009587">
    <property type="entry name" value="PRK13027.1"/>
    <property type="match status" value="1"/>
</dbReference>
<dbReference type="PANTHER" id="PTHR42865:SF1">
    <property type="entry name" value="AEROBIC C4-DICARBOXYLATE TRANSPORT PROTEIN"/>
    <property type="match status" value="1"/>
</dbReference>
<dbReference type="PANTHER" id="PTHR42865">
    <property type="entry name" value="PROTON/GLUTAMATE-ASPARTATE SYMPORTER"/>
    <property type="match status" value="1"/>
</dbReference>
<dbReference type="Pfam" id="PF00375">
    <property type="entry name" value="SDF"/>
    <property type="match status" value="1"/>
</dbReference>
<dbReference type="PRINTS" id="PR00173">
    <property type="entry name" value="EDTRNSPORT"/>
</dbReference>
<dbReference type="SUPFAM" id="SSF118215">
    <property type="entry name" value="Proton glutamate symport protein"/>
    <property type="match status" value="1"/>
</dbReference>
<dbReference type="PROSITE" id="PS00713">
    <property type="entry name" value="NA_DICARBOXYL_SYMP_1"/>
    <property type="match status" value="1"/>
</dbReference>
<dbReference type="PROSITE" id="PS00714">
    <property type="entry name" value="NA_DICARBOXYL_SYMP_2"/>
    <property type="match status" value="1"/>
</dbReference>